<evidence type="ECO:0000250" key="1">
    <source>
        <dbReference type="UniProtKB" id="Q86TL0"/>
    </source>
</evidence>
<evidence type="ECO:0000250" key="2">
    <source>
        <dbReference type="UniProtKB" id="Q8BGV9"/>
    </source>
</evidence>
<evidence type="ECO:0000250" key="3">
    <source>
        <dbReference type="UniProtKB" id="Q9Y4P1"/>
    </source>
</evidence>
<evidence type="ECO:0000256" key="4">
    <source>
        <dbReference type="SAM" id="MobiDB-lite"/>
    </source>
</evidence>
<evidence type="ECO:0000269" key="5">
    <source>
    </source>
</evidence>
<evidence type="ECO:0000305" key="6"/>
<feature type="chain" id="PRO_0000454235" description="Cysteine protease ATG4D">
    <location>
        <begin position="1"/>
        <end position="473"/>
    </location>
</feature>
<feature type="chain" id="PRO_0000454236" description="Cysteine protease ATG4D, mitochondrial" evidence="1">
    <location>
        <begin position="63"/>
        <end position="473"/>
    </location>
</feature>
<feature type="region of interest" description="Disordered" evidence="4">
    <location>
        <begin position="1"/>
        <end position="59"/>
    </location>
</feature>
<feature type="region of interest" description="Cryptic mitochondrial signal peptide" evidence="1">
    <location>
        <begin position="63"/>
        <end position="102"/>
    </location>
</feature>
<feature type="compositionally biased region" description="Basic and acidic residues" evidence="4">
    <location>
        <begin position="15"/>
        <end position="26"/>
    </location>
</feature>
<feature type="compositionally biased region" description="Low complexity" evidence="4">
    <location>
        <begin position="39"/>
        <end position="56"/>
    </location>
</feature>
<feature type="active site" description="Nucleophile" evidence="3">
    <location>
        <position position="143"/>
    </location>
</feature>
<feature type="active site" evidence="3">
    <location>
        <position position="355"/>
    </location>
</feature>
<feature type="active site" evidence="3">
    <location>
        <position position="357"/>
    </location>
</feature>
<feature type="site" description="Cleavage; by CASP3" evidence="1">
    <location>
        <begin position="62"/>
        <end position="63"/>
    </location>
</feature>
<feature type="modified residue" description="Phosphoserine" evidence="1">
    <location>
        <position position="466"/>
    </location>
</feature>
<feature type="sequence variant" description="Found in dogs with neurodegenerative disease." evidence="5">
    <original>A</original>
    <variation>T</variation>
    <location>
        <position position="430"/>
    </location>
</feature>
<comment type="function">
    <molecule>Cysteine protease ATG4D</molecule>
    <text evidence="1 2 3 5">Cysteine protease that plays a key role in autophagy by mediating both proteolytic activation and delipidation of ATG8 family proteins. The protease activity is required for proteolytic activation of ATG8 family proteins: cleaves the C-terminal amino acid of ATG8 proteins MAP1LC3 and GABARAPL2, to reveal a C-terminal glycine (By similarity). Exposure of the glycine at the C-terminus is essential for ATG8 proteins conjugation to phosphatidylethanolamine (PE) and insertion to membranes, which is necessary for autophagy (By similarity). In addition to the protease activity, also mediates delipidation of ATG8 family proteins. Catalyzes delipidation of PE-conjugated forms of ATG8 proteins during macroautophagy. Also involved in non-canonical autophagy, a parallel pathway involving conjugation of ATG8 proteins to single membranes at endolysosomal compartments, by catalyzing delipidation of ATG8 proteins conjugated to phosphatidylserine (PS) (By similarity). ATG4D plays a role in the autophagy-mediated neuronal homeostasis in the central nervous system (PubMed:25875846). Compared to other members of the family (ATG4A, ATG4B or ATG4C), constitutes the major protein for the delipidation activity, while it promotes weak proteolytic activation of ATG8 proteins (By similarity). Involved in phagophore growth during mitophagy independently of its protease activity and of ATG8 proteins: acts by regulating ATG9A trafficking to mitochondria and promoting phagophore-endoplasmic reticulum contacts during the lipid transfer phase of mitophagy (By similarity).</text>
</comment>
<comment type="function">
    <molecule>Cysteine protease ATG4D, mitochondrial</molecule>
    <text evidence="1">Plays a role as an autophagy regulator that links mitochondrial dysfunction with apoptosis. The mitochondrial import of ATG4D during cellular stress and differentiation may play important roles in the regulation of mitochondrial physiology, ROS, mitophagy and cell viability.</text>
</comment>
<comment type="catalytic activity">
    <reaction evidence="1">
        <text>[protein]-C-terminal L-amino acid-glycyl-phosphatidylethanolamide + H2O = [protein]-C-terminal L-amino acid-glycine + a 1,2-diacyl-sn-glycero-3-phosphoethanolamine</text>
        <dbReference type="Rhea" id="RHEA:67548"/>
        <dbReference type="Rhea" id="RHEA-COMP:17323"/>
        <dbReference type="Rhea" id="RHEA-COMP:17324"/>
        <dbReference type="ChEBI" id="CHEBI:15377"/>
        <dbReference type="ChEBI" id="CHEBI:64612"/>
        <dbReference type="ChEBI" id="CHEBI:172940"/>
        <dbReference type="ChEBI" id="CHEBI:172941"/>
    </reaction>
    <physiologicalReaction direction="left-to-right" evidence="1">
        <dbReference type="Rhea" id="RHEA:67549"/>
    </physiologicalReaction>
</comment>
<comment type="catalytic activity">
    <reaction evidence="1">
        <text>[protein]-C-terminal L-amino acid-glycyl-phosphatidylserine + H2O = [protein]-C-terminal L-amino acid-glycine + a 1,2-diacyl-sn-glycero-3-phospho-L-serine</text>
        <dbReference type="Rhea" id="RHEA:67576"/>
        <dbReference type="Rhea" id="RHEA-COMP:17324"/>
        <dbReference type="Rhea" id="RHEA-COMP:17326"/>
        <dbReference type="ChEBI" id="CHEBI:15377"/>
        <dbReference type="ChEBI" id="CHEBI:57262"/>
        <dbReference type="ChEBI" id="CHEBI:172940"/>
        <dbReference type="ChEBI" id="CHEBI:172942"/>
    </reaction>
    <physiologicalReaction direction="left-to-right" evidence="1">
        <dbReference type="Rhea" id="RHEA:67577"/>
    </physiologicalReaction>
</comment>
<comment type="activity regulation">
    <text evidence="1">Inhibited by N-ethylmaleimide.</text>
</comment>
<comment type="subcellular location">
    <molecule>Cysteine protease ATG4D</molecule>
    <subcellularLocation>
        <location evidence="1">Cytoplasm</location>
    </subcellularLocation>
</comment>
<comment type="subcellular location">
    <molecule>Cysteine protease ATG4D, mitochondrial</molecule>
    <subcellularLocation>
        <location evidence="1">Cytoplasm</location>
    </subcellularLocation>
    <subcellularLocation>
        <location evidence="1">Mitochondrion matrix</location>
    </subcellularLocation>
    <text evidence="1">Imported into mitochondrial matrix after cleavage by CASP3 during oxidative stress and cell death.</text>
</comment>
<comment type="domain">
    <text evidence="1">The cryptic mitochondrial transit peptide is revealed after cleavage by caspase upon oxidative stress and cell death. It acts then as a functional transit peptide, and allows the import of the cleaved protein into the mitochondria.</text>
</comment>
<comment type="PTM">
    <text evidence="1">Cleaved by CASP3 during apoptosis which leads to increased activity. The cleavage by CASP3 reveals a cryptic mitochondrial targeting sequence immediately downstream of their canonical caspase cleavage sites which leads to mitochondrial import of the protein.</text>
</comment>
<comment type="disease">
    <text evidence="5">Defects in ATG4D are the cause of a neurodegenerative disease present in the Lagotto Romagnolo dog breed (PubMed:25875846). Affected dogs suffer from progressive cerebellar ataxia, sometimes accompanied by episodic nystagmus and behavioral changes (PubMed:25875846). Defects are caused by impaired autophagy: neuronal cells display cytoplasmic vacuolization in the nervous system, as well as spheroid formation and cytoplasmic aggregation of vacuoles in secretory epithelial tissues and mesenchymal cells (PubMed:25875846).</text>
</comment>
<comment type="similarity">
    <text evidence="6">Belongs to the peptidase C54 family.</text>
</comment>
<protein>
    <recommendedName>
        <fullName evidence="6">Cysteine protease ATG4D</fullName>
        <ecNumber evidence="1">3.4.22.-</ecNumber>
    </recommendedName>
    <alternativeName>
        <fullName evidence="1">Autophagy-related protein 4 homolog D</fullName>
    </alternativeName>
    <component>
        <recommendedName>
            <fullName evidence="1">Cysteine protease ATG4D, mitochondrial</fullName>
        </recommendedName>
    </component>
</protein>
<sequence length="473" mass="52747">MNSVSPAAAQYRSGSPEDARRPEGRRPRGPRVPDPNGPRPSGASGPALGSPAAAPGEPDEVDKFKAKFLTAWNNVKYGWAVKSRTSFSKISSVHLCGRRYRFEGEGDIQRFQRDFVSRLWLTYRRDFPPLAGGCLTSDCGWGCMLRSGQMMLAQGLLLHFLPRDWTWAEGPGLGPSEPAGLASPNRYRGPARWMPPRWAQGTPELEQERRHRQIVSWFADHPQAPFGLHRLVELGQSSGKKAGDWYGPSLVAHILRKAVESCSEITRLVVYVSQDCTVYKADVARLVARPDPTAEWKSVVILVPVRLGGETLNPVYVPCVKELLRSELCLGIMGGKPRHSLYFIGYQDDFLLYLDPHYCQPTVDVSQADFPLESFHCTSPRKMAFAKMDPSCTVGFYAGDQKEFETLCSELTRVLSSSSATERYPMFTLAEGHAQDHSLDDLCSQLSQPTLRLPRTGRLLKAKRPSSEDFVFL</sequence>
<accession>E2RDP2</accession>
<reference key="1">
    <citation type="journal article" date="2005" name="Nature">
        <title>Genome sequence, comparative analysis and haplotype structure of the domestic dog.</title>
        <authorList>
            <person name="Lindblad-Toh K."/>
            <person name="Wade C.M."/>
            <person name="Mikkelsen T.S."/>
            <person name="Karlsson E.K."/>
            <person name="Jaffe D.B."/>
            <person name="Kamal M."/>
            <person name="Clamp M."/>
            <person name="Chang J.L."/>
            <person name="Kulbokas E.J. III"/>
            <person name="Zody M.C."/>
            <person name="Mauceli E."/>
            <person name="Xie X."/>
            <person name="Breen M."/>
            <person name="Wayne R.K."/>
            <person name="Ostrander E.A."/>
            <person name="Ponting C.P."/>
            <person name="Galibert F."/>
            <person name="Smith D.R."/>
            <person name="deJong P.J."/>
            <person name="Kirkness E.F."/>
            <person name="Alvarez P."/>
            <person name="Biagi T."/>
            <person name="Brockman W."/>
            <person name="Butler J."/>
            <person name="Chin C.-W."/>
            <person name="Cook A."/>
            <person name="Cuff J."/>
            <person name="Daly M.J."/>
            <person name="DeCaprio D."/>
            <person name="Gnerre S."/>
            <person name="Grabherr M."/>
            <person name="Kellis M."/>
            <person name="Kleber M."/>
            <person name="Bardeleben C."/>
            <person name="Goodstadt L."/>
            <person name="Heger A."/>
            <person name="Hitte C."/>
            <person name="Kim L."/>
            <person name="Koepfli K.-P."/>
            <person name="Parker H.G."/>
            <person name="Pollinger J.P."/>
            <person name="Searle S.M.J."/>
            <person name="Sutter N.B."/>
            <person name="Thomas R."/>
            <person name="Webber C."/>
            <person name="Baldwin J."/>
            <person name="Abebe A."/>
            <person name="Abouelleil A."/>
            <person name="Aftuck L."/>
            <person name="Ait-Zahra M."/>
            <person name="Aldredge T."/>
            <person name="Allen N."/>
            <person name="An P."/>
            <person name="Anderson S."/>
            <person name="Antoine C."/>
            <person name="Arachchi H."/>
            <person name="Aslam A."/>
            <person name="Ayotte L."/>
            <person name="Bachantsang P."/>
            <person name="Barry A."/>
            <person name="Bayul T."/>
            <person name="Benamara M."/>
            <person name="Berlin A."/>
            <person name="Bessette D."/>
            <person name="Blitshteyn B."/>
            <person name="Bloom T."/>
            <person name="Blye J."/>
            <person name="Boguslavskiy L."/>
            <person name="Bonnet C."/>
            <person name="Boukhgalter B."/>
            <person name="Brown A."/>
            <person name="Cahill P."/>
            <person name="Calixte N."/>
            <person name="Camarata J."/>
            <person name="Cheshatsang Y."/>
            <person name="Chu J."/>
            <person name="Citroen M."/>
            <person name="Collymore A."/>
            <person name="Cooke P."/>
            <person name="Dawoe T."/>
            <person name="Daza R."/>
            <person name="Decktor K."/>
            <person name="DeGray S."/>
            <person name="Dhargay N."/>
            <person name="Dooley K."/>
            <person name="Dooley K."/>
            <person name="Dorje P."/>
            <person name="Dorjee K."/>
            <person name="Dorris L."/>
            <person name="Duffey N."/>
            <person name="Dupes A."/>
            <person name="Egbiremolen O."/>
            <person name="Elong R."/>
            <person name="Falk J."/>
            <person name="Farina A."/>
            <person name="Faro S."/>
            <person name="Ferguson D."/>
            <person name="Ferreira P."/>
            <person name="Fisher S."/>
            <person name="FitzGerald M."/>
            <person name="Foley K."/>
            <person name="Foley C."/>
            <person name="Franke A."/>
            <person name="Friedrich D."/>
            <person name="Gage D."/>
            <person name="Garber M."/>
            <person name="Gearin G."/>
            <person name="Giannoukos G."/>
            <person name="Goode T."/>
            <person name="Goyette A."/>
            <person name="Graham J."/>
            <person name="Grandbois E."/>
            <person name="Gyaltsen K."/>
            <person name="Hafez N."/>
            <person name="Hagopian D."/>
            <person name="Hagos B."/>
            <person name="Hall J."/>
            <person name="Healy C."/>
            <person name="Hegarty R."/>
            <person name="Honan T."/>
            <person name="Horn A."/>
            <person name="Houde N."/>
            <person name="Hughes L."/>
            <person name="Hunnicutt L."/>
            <person name="Husby M."/>
            <person name="Jester B."/>
            <person name="Jones C."/>
            <person name="Kamat A."/>
            <person name="Kanga B."/>
            <person name="Kells C."/>
            <person name="Khazanovich D."/>
            <person name="Kieu A.C."/>
            <person name="Kisner P."/>
            <person name="Kumar M."/>
            <person name="Lance K."/>
            <person name="Landers T."/>
            <person name="Lara M."/>
            <person name="Lee W."/>
            <person name="Leger J.-P."/>
            <person name="Lennon N."/>
            <person name="Leuper L."/>
            <person name="LeVine S."/>
            <person name="Liu J."/>
            <person name="Liu X."/>
            <person name="Lokyitsang Y."/>
            <person name="Lokyitsang T."/>
            <person name="Lui A."/>
            <person name="Macdonald J."/>
            <person name="Major J."/>
            <person name="Marabella R."/>
            <person name="Maru K."/>
            <person name="Matthews C."/>
            <person name="McDonough S."/>
            <person name="Mehta T."/>
            <person name="Meldrim J."/>
            <person name="Melnikov A."/>
            <person name="Meneus L."/>
            <person name="Mihalev A."/>
            <person name="Mihova T."/>
            <person name="Miller K."/>
            <person name="Mittelman R."/>
            <person name="Mlenga V."/>
            <person name="Mulrain L."/>
            <person name="Munson G."/>
            <person name="Navidi A."/>
            <person name="Naylor J."/>
            <person name="Nguyen T."/>
            <person name="Nguyen N."/>
            <person name="Nguyen C."/>
            <person name="Nguyen T."/>
            <person name="Nicol R."/>
            <person name="Norbu N."/>
            <person name="Norbu C."/>
            <person name="Novod N."/>
            <person name="Nyima T."/>
            <person name="Olandt P."/>
            <person name="O'Neill B."/>
            <person name="O'Neill K."/>
            <person name="Osman S."/>
            <person name="Oyono L."/>
            <person name="Patti C."/>
            <person name="Perrin D."/>
            <person name="Phunkhang P."/>
            <person name="Pierre F."/>
            <person name="Priest M."/>
            <person name="Rachupka A."/>
            <person name="Raghuraman S."/>
            <person name="Rameau R."/>
            <person name="Ray V."/>
            <person name="Raymond C."/>
            <person name="Rege F."/>
            <person name="Rise C."/>
            <person name="Rogers J."/>
            <person name="Rogov P."/>
            <person name="Sahalie J."/>
            <person name="Settipalli S."/>
            <person name="Sharpe T."/>
            <person name="Shea T."/>
            <person name="Sheehan M."/>
            <person name="Sherpa N."/>
            <person name="Shi J."/>
            <person name="Shih D."/>
            <person name="Sloan J."/>
            <person name="Smith C."/>
            <person name="Sparrow T."/>
            <person name="Stalker J."/>
            <person name="Stange-Thomann N."/>
            <person name="Stavropoulos S."/>
            <person name="Stone C."/>
            <person name="Stone S."/>
            <person name="Sykes S."/>
            <person name="Tchuinga P."/>
            <person name="Tenzing P."/>
            <person name="Tesfaye S."/>
            <person name="Thoulutsang D."/>
            <person name="Thoulutsang Y."/>
            <person name="Topham K."/>
            <person name="Topping I."/>
            <person name="Tsamla T."/>
            <person name="Vassiliev H."/>
            <person name="Venkataraman V."/>
            <person name="Vo A."/>
            <person name="Wangchuk T."/>
            <person name="Wangdi T."/>
            <person name="Weiand M."/>
            <person name="Wilkinson J."/>
            <person name="Wilson A."/>
            <person name="Yadav S."/>
            <person name="Yang S."/>
            <person name="Yang X."/>
            <person name="Young G."/>
            <person name="Yu Q."/>
            <person name="Zainoun J."/>
            <person name="Zembek L."/>
            <person name="Zimmer A."/>
            <person name="Lander E.S."/>
        </authorList>
    </citation>
    <scope>NUCLEOTIDE SEQUENCE [LARGE SCALE GENOMIC DNA]</scope>
    <source>
        <strain>Boxer</strain>
    </source>
</reference>
<reference key="2">
    <citation type="journal article" date="2015" name="PLoS Genet.">
        <title>A missense change in the ATG4D gene links aberrant autophagy to a neurodegenerative vacuolar storage disease.</title>
        <authorList>
            <person name="Kyoestilae K."/>
            <person name="Syrjae P."/>
            <person name="Jagannathan V."/>
            <person name="Chandrasekar G."/>
            <person name="Jokinen T.S."/>
            <person name="Seppaelae E.H."/>
            <person name="Becker D."/>
            <person name="Droegemueller M."/>
            <person name="Dietschi E."/>
            <person name="Droegemueller C."/>
            <person name="Lang J."/>
            <person name="Steffen F."/>
            <person name="Rohdin C."/>
            <person name="Jaederlund K.H."/>
            <person name="Lappalainen A.K."/>
            <person name="Hahn K."/>
            <person name="Wohlsein P."/>
            <person name="Baumgaertner W."/>
            <person name="Henke D."/>
            <person name="Oevermann A."/>
            <person name="Kere J."/>
            <person name="Lohi H."/>
            <person name="Leeb T."/>
        </authorList>
    </citation>
    <scope>FUNCTION</scope>
    <scope>INVOLVEMENT IN NEURODEGENERATIVE DISEASE</scope>
    <scope>VARIANT THR-430</scope>
</reference>
<gene>
    <name type="primary">ATG4D</name>
</gene>
<organism>
    <name type="scientific">Canis lupus familiaris</name>
    <name type="common">Dog</name>
    <name type="synonym">Canis familiaris</name>
    <dbReference type="NCBI Taxonomy" id="9615"/>
    <lineage>
        <taxon>Eukaryota</taxon>
        <taxon>Metazoa</taxon>
        <taxon>Chordata</taxon>
        <taxon>Craniata</taxon>
        <taxon>Vertebrata</taxon>
        <taxon>Euteleostomi</taxon>
        <taxon>Mammalia</taxon>
        <taxon>Eutheria</taxon>
        <taxon>Laurasiatheria</taxon>
        <taxon>Carnivora</taxon>
        <taxon>Caniformia</taxon>
        <taxon>Canidae</taxon>
        <taxon>Canis</taxon>
    </lineage>
</organism>
<name>ATG4D_CANLF</name>
<keyword id="KW-0053">Apoptosis</keyword>
<keyword id="KW-0072">Autophagy</keyword>
<keyword id="KW-0963">Cytoplasm</keyword>
<keyword id="KW-0378">Hydrolase</keyword>
<keyword id="KW-0496">Mitochondrion</keyword>
<keyword id="KW-0597">Phosphoprotein</keyword>
<keyword id="KW-0645">Protease</keyword>
<keyword id="KW-0653">Protein transport</keyword>
<keyword id="KW-1185">Reference proteome</keyword>
<keyword id="KW-0788">Thiol protease</keyword>
<keyword id="KW-0813">Transport</keyword>
<keyword id="KW-0833">Ubl conjugation pathway</keyword>
<dbReference type="EC" id="3.4.22.-" evidence="1"/>
<dbReference type="EMBL" id="AAEX03012418">
    <property type="status" value="NOT_ANNOTATED_CDS"/>
    <property type="molecule type" value="Genomic_DNA"/>
</dbReference>
<dbReference type="EMBL" id="AAEX03012419">
    <property type="status" value="NOT_ANNOTATED_CDS"/>
    <property type="molecule type" value="Genomic_DNA"/>
</dbReference>
<dbReference type="RefSeq" id="XP_038284570.1">
    <property type="nucleotide sequence ID" value="XM_038428642.1"/>
</dbReference>
<dbReference type="RefSeq" id="XP_038423238.1">
    <property type="nucleotide sequence ID" value="XM_038567310.1"/>
</dbReference>
<dbReference type="RefSeq" id="XP_542069.1">
    <property type="nucleotide sequence ID" value="XM_542069.7"/>
</dbReference>
<dbReference type="SMR" id="E2RDP2"/>
<dbReference type="FunCoup" id="E2RDP2">
    <property type="interactions" value="163"/>
</dbReference>
<dbReference type="STRING" id="9615.ENSCAFP00000026214"/>
<dbReference type="MEROPS" id="C54.005"/>
<dbReference type="PaxDb" id="9612-ENSCAFP00000026214"/>
<dbReference type="Ensembl" id="ENSCAFT00000028187.5">
    <property type="protein sequence ID" value="ENSCAFP00000026214.3"/>
    <property type="gene ID" value="ENSCAFG00000017776.5"/>
</dbReference>
<dbReference type="Ensembl" id="ENSCAFT00030035500.1">
    <property type="protein sequence ID" value="ENSCAFP00030030961.1"/>
    <property type="gene ID" value="ENSCAFG00030019316.1"/>
</dbReference>
<dbReference type="Ensembl" id="ENSCAFT00040037370.1">
    <property type="protein sequence ID" value="ENSCAFP00040032567.1"/>
    <property type="gene ID" value="ENSCAFG00040020210.1"/>
</dbReference>
<dbReference type="Ensembl" id="ENSCAFT00845046627.1">
    <property type="protein sequence ID" value="ENSCAFP00845036604.1"/>
    <property type="gene ID" value="ENSCAFG00845026379.1"/>
</dbReference>
<dbReference type="GeneID" id="484953"/>
<dbReference type="CTD" id="84971"/>
<dbReference type="VEuPathDB" id="HostDB:ENSCAFG00845026379"/>
<dbReference type="VGNC" id="VGNC:38225">
    <property type="gene designation" value="ATG4D"/>
</dbReference>
<dbReference type="eggNOG" id="KOG2674">
    <property type="taxonomic scope" value="Eukaryota"/>
</dbReference>
<dbReference type="GeneTree" id="ENSGT00530000063000"/>
<dbReference type="HOGENOM" id="CLU_021259_3_2_1"/>
<dbReference type="InParanoid" id="E2RDP2"/>
<dbReference type="OMA" id="DSFHCSW"/>
<dbReference type="OrthoDB" id="2960936at2759"/>
<dbReference type="TreeFam" id="TF314847"/>
<dbReference type="Reactome" id="R-CFA-1632852">
    <property type="pathway name" value="Macroautophagy"/>
</dbReference>
<dbReference type="Proteomes" id="UP000002254">
    <property type="component" value="Chromosome 20"/>
</dbReference>
<dbReference type="Proteomes" id="UP000694429">
    <property type="component" value="Chromosome 20"/>
</dbReference>
<dbReference type="Proteomes" id="UP000694542">
    <property type="component" value="Chromosome 20"/>
</dbReference>
<dbReference type="Proteomes" id="UP000805418">
    <property type="component" value="Chromosome 20"/>
</dbReference>
<dbReference type="Bgee" id="ENSCAFG00000017776">
    <property type="expression patterns" value="Expressed in granulocyte and 49 other cell types or tissues"/>
</dbReference>
<dbReference type="GO" id="GO:0005737">
    <property type="term" value="C:cytoplasm"/>
    <property type="evidence" value="ECO:0000318"/>
    <property type="project" value="GO_Central"/>
</dbReference>
<dbReference type="GO" id="GO:0005759">
    <property type="term" value="C:mitochondrial matrix"/>
    <property type="evidence" value="ECO:0007669"/>
    <property type="project" value="UniProtKB-SubCell"/>
</dbReference>
<dbReference type="GO" id="GO:0005654">
    <property type="term" value="C:nucleoplasm"/>
    <property type="evidence" value="ECO:0007669"/>
    <property type="project" value="Ensembl"/>
</dbReference>
<dbReference type="GO" id="GO:0004197">
    <property type="term" value="F:cysteine-type endopeptidase activity"/>
    <property type="evidence" value="ECO:0000318"/>
    <property type="project" value="GO_Central"/>
</dbReference>
<dbReference type="GO" id="GO:0019786">
    <property type="term" value="F:protein-phosphatidylethanolamide deconjugating activity"/>
    <property type="evidence" value="ECO:0000318"/>
    <property type="project" value="GO_Central"/>
</dbReference>
<dbReference type="GO" id="GO:0035973">
    <property type="term" value="P:aggrephagy"/>
    <property type="evidence" value="ECO:0000318"/>
    <property type="project" value="GO_Central"/>
</dbReference>
<dbReference type="GO" id="GO:0006915">
    <property type="term" value="P:apoptotic process"/>
    <property type="evidence" value="ECO:0007669"/>
    <property type="project" value="UniProtKB-KW"/>
</dbReference>
<dbReference type="GO" id="GO:0000045">
    <property type="term" value="P:autophagosome assembly"/>
    <property type="evidence" value="ECO:0000318"/>
    <property type="project" value="GO_Central"/>
</dbReference>
<dbReference type="GO" id="GO:0000423">
    <property type="term" value="P:mitophagy"/>
    <property type="evidence" value="ECO:0000318"/>
    <property type="project" value="GO_Central"/>
</dbReference>
<dbReference type="GO" id="GO:0034727">
    <property type="term" value="P:piecemeal microautophagy of the nucleus"/>
    <property type="evidence" value="ECO:0000318"/>
    <property type="project" value="GO_Central"/>
</dbReference>
<dbReference type="GO" id="GO:0034497">
    <property type="term" value="P:protein localization to phagophore assembly site"/>
    <property type="evidence" value="ECO:0007669"/>
    <property type="project" value="Ensembl"/>
</dbReference>
<dbReference type="GO" id="GO:0016485">
    <property type="term" value="P:protein processing"/>
    <property type="evidence" value="ECO:0000318"/>
    <property type="project" value="GO_Central"/>
</dbReference>
<dbReference type="GO" id="GO:0015031">
    <property type="term" value="P:protein transport"/>
    <property type="evidence" value="ECO:0007669"/>
    <property type="project" value="UniProtKB-KW"/>
</dbReference>
<dbReference type="InterPro" id="IPR038765">
    <property type="entry name" value="Papain-like_cys_pep_sf"/>
</dbReference>
<dbReference type="InterPro" id="IPR005078">
    <property type="entry name" value="Peptidase_C54"/>
</dbReference>
<dbReference type="InterPro" id="IPR046792">
    <property type="entry name" value="Peptidase_C54_cat"/>
</dbReference>
<dbReference type="PANTHER" id="PTHR22624">
    <property type="entry name" value="CYSTEINE PROTEASE ATG4"/>
    <property type="match status" value="1"/>
</dbReference>
<dbReference type="PANTHER" id="PTHR22624:SF36">
    <property type="entry name" value="CYSTEINE PROTEASE ATG4D"/>
    <property type="match status" value="1"/>
</dbReference>
<dbReference type="Pfam" id="PF03416">
    <property type="entry name" value="Peptidase_C54"/>
    <property type="match status" value="1"/>
</dbReference>
<dbReference type="SUPFAM" id="SSF54001">
    <property type="entry name" value="Cysteine proteinases"/>
    <property type="match status" value="1"/>
</dbReference>
<proteinExistence type="inferred from homology"/>